<gene>
    <name evidence="1" type="primary">sfsA</name>
    <name type="ordered locus">Shal_0755</name>
</gene>
<comment type="similarity">
    <text evidence="1">Belongs to the SfsA family.</text>
</comment>
<protein>
    <recommendedName>
        <fullName evidence="1">Sugar fermentation stimulation protein homolog</fullName>
    </recommendedName>
</protein>
<reference key="1">
    <citation type="submission" date="2008-01" db="EMBL/GenBank/DDBJ databases">
        <title>Complete sequence of Shewanella halifaxensis HAW-EB4.</title>
        <authorList>
            <consortium name="US DOE Joint Genome Institute"/>
            <person name="Copeland A."/>
            <person name="Lucas S."/>
            <person name="Lapidus A."/>
            <person name="Glavina del Rio T."/>
            <person name="Dalin E."/>
            <person name="Tice H."/>
            <person name="Bruce D."/>
            <person name="Goodwin L."/>
            <person name="Pitluck S."/>
            <person name="Sims D."/>
            <person name="Brettin T."/>
            <person name="Detter J.C."/>
            <person name="Han C."/>
            <person name="Kuske C.R."/>
            <person name="Schmutz J."/>
            <person name="Larimer F."/>
            <person name="Land M."/>
            <person name="Hauser L."/>
            <person name="Kyrpides N."/>
            <person name="Kim E."/>
            <person name="Zhao J.-S."/>
            <person name="Richardson P."/>
        </authorList>
    </citation>
    <scope>NUCLEOTIDE SEQUENCE [LARGE SCALE GENOMIC DNA]</scope>
    <source>
        <strain>HAW-EB4</strain>
    </source>
</reference>
<organism>
    <name type="scientific">Shewanella halifaxensis (strain HAW-EB4)</name>
    <dbReference type="NCBI Taxonomy" id="458817"/>
    <lineage>
        <taxon>Bacteria</taxon>
        <taxon>Pseudomonadati</taxon>
        <taxon>Pseudomonadota</taxon>
        <taxon>Gammaproteobacteria</taxon>
        <taxon>Alteromonadales</taxon>
        <taxon>Shewanellaceae</taxon>
        <taxon>Shewanella</taxon>
    </lineage>
</organism>
<feature type="chain" id="PRO_1000075547" description="Sugar fermentation stimulation protein homolog">
    <location>
        <begin position="1"/>
        <end position="234"/>
    </location>
</feature>
<evidence type="ECO:0000255" key="1">
    <source>
        <dbReference type="HAMAP-Rule" id="MF_00095"/>
    </source>
</evidence>
<dbReference type="EMBL" id="CP000931">
    <property type="protein sequence ID" value="ABZ75330.1"/>
    <property type="molecule type" value="Genomic_DNA"/>
</dbReference>
<dbReference type="RefSeq" id="WP_012275884.1">
    <property type="nucleotide sequence ID" value="NC_010334.1"/>
</dbReference>
<dbReference type="SMR" id="B0TTI7"/>
<dbReference type="STRING" id="458817.Shal_0755"/>
<dbReference type="KEGG" id="shl:Shal_0755"/>
<dbReference type="eggNOG" id="COG1489">
    <property type="taxonomic scope" value="Bacteria"/>
</dbReference>
<dbReference type="HOGENOM" id="CLU_052299_2_0_6"/>
<dbReference type="OrthoDB" id="9802365at2"/>
<dbReference type="Proteomes" id="UP000001317">
    <property type="component" value="Chromosome"/>
</dbReference>
<dbReference type="GO" id="GO:0003677">
    <property type="term" value="F:DNA binding"/>
    <property type="evidence" value="ECO:0007669"/>
    <property type="project" value="InterPro"/>
</dbReference>
<dbReference type="CDD" id="cd22359">
    <property type="entry name" value="SfsA-like_bacterial"/>
    <property type="match status" value="1"/>
</dbReference>
<dbReference type="FunFam" id="2.40.50.580:FF:000001">
    <property type="entry name" value="Sugar fermentation stimulation protein A"/>
    <property type="match status" value="1"/>
</dbReference>
<dbReference type="FunFam" id="3.40.1350.60:FF:000001">
    <property type="entry name" value="Sugar fermentation stimulation protein A"/>
    <property type="match status" value="1"/>
</dbReference>
<dbReference type="Gene3D" id="2.40.50.580">
    <property type="match status" value="1"/>
</dbReference>
<dbReference type="Gene3D" id="3.40.1350.60">
    <property type="match status" value="1"/>
</dbReference>
<dbReference type="HAMAP" id="MF_00095">
    <property type="entry name" value="SfsA"/>
    <property type="match status" value="1"/>
</dbReference>
<dbReference type="InterPro" id="IPR005224">
    <property type="entry name" value="SfsA"/>
</dbReference>
<dbReference type="InterPro" id="IPR040452">
    <property type="entry name" value="SfsA_C"/>
</dbReference>
<dbReference type="InterPro" id="IPR041465">
    <property type="entry name" value="SfsA_N"/>
</dbReference>
<dbReference type="NCBIfam" id="TIGR00230">
    <property type="entry name" value="sfsA"/>
    <property type="match status" value="1"/>
</dbReference>
<dbReference type="PANTHER" id="PTHR30545">
    <property type="entry name" value="SUGAR FERMENTATION STIMULATION PROTEIN A"/>
    <property type="match status" value="1"/>
</dbReference>
<dbReference type="PANTHER" id="PTHR30545:SF2">
    <property type="entry name" value="SUGAR FERMENTATION STIMULATION PROTEIN A"/>
    <property type="match status" value="1"/>
</dbReference>
<dbReference type="Pfam" id="PF03749">
    <property type="entry name" value="SfsA"/>
    <property type="match status" value="1"/>
</dbReference>
<dbReference type="Pfam" id="PF17746">
    <property type="entry name" value="SfsA_N"/>
    <property type="match status" value="1"/>
</dbReference>
<sequence length="234" mass="25995">MEFSSAFESGVLLQRYKRFLTDITLDNGEEVTIHCPNTGSMRNCLFVGEKVWFSVSDNPKRKYSRTWELAQTPEGHIIGINTGRANALAEEAINNGIITELQGYGSLRREVKYGSENSRIDILLEDADKANCYIEVKSCTLLEQGLGYFPDAVTTRGQKHLRELMEMVEQGQRAVLLFVVQHSGINCVQAAAHIDPSYAALLSEAHAKGVEIIAYKADSSPIEARLVKSCPVRL</sequence>
<accession>B0TTI7</accession>
<proteinExistence type="inferred from homology"/>
<name>SFSA_SHEHH</name>